<proteinExistence type="evidence at protein level"/>
<protein>
    <recommendedName>
        <fullName>ADP-ribosylation factor GTPase-activating protein GCS1</fullName>
        <shortName>ARF GAP GCS1</shortName>
    </recommendedName>
</protein>
<evidence type="ECO:0000255" key="1">
    <source>
        <dbReference type="PROSITE-ProRule" id="PRU00288"/>
    </source>
</evidence>
<evidence type="ECO:0000256" key="2">
    <source>
        <dbReference type="SAM" id="MobiDB-lite"/>
    </source>
</evidence>
<evidence type="ECO:0000269" key="3">
    <source>
    </source>
</evidence>
<evidence type="ECO:0000269" key="4">
    <source>
    </source>
</evidence>
<evidence type="ECO:0000269" key="5">
    <source>
    </source>
</evidence>
<evidence type="ECO:0000269" key="6">
    <source>
    </source>
</evidence>
<evidence type="ECO:0000269" key="7">
    <source>
    </source>
</evidence>
<evidence type="ECO:0000305" key="8">
    <source>
    </source>
</evidence>
<evidence type="ECO:0007744" key="9">
    <source>
    </source>
</evidence>
<evidence type="ECO:0007744" key="10">
    <source>
    </source>
</evidence>
<evidence type="ECO:0007744" key="11">
    <source>
    </source>
</evidence>
<dbReference type="EMBL" id="L24125">
    <property type="protein sequence ID" value="AAA50389.1"/>
    <property type="molecule type" value="Genomic_DNA"/>
</dbReference>
<dbReference type="EMBL" id="Z74274">
    <property type="protein sequence ID" value="CAA98805.1"/>
    <property type="molecule type" value="Genomic_DNA"/>
</dbReference>
<dbReference type="EMBL" id="BK006938">
    <property type="protein sequence ID" value="DAA11639.1"/>
    <property type="molecule type" value="Genomic_DNA"/>
</dbReference>
<dbReference type="PIR" id="S47006">
    <property type="entry name" value="S47006"/>
</dbReference>
<dbReference type="RefSeq" id="NP_010055.1">
    <property type="nucleotide sequence ID" value="NM_001180286.1"/>
</dbReference>
<dbReference type="PDB" id="5FJX">
    <property type="method" value="X-ray"/>
    <property type="resolution" value="2.45 A"/>
    <property type="chains" value="D/E=345-352"/>
</dbReference>
<dbReference type="PDBsum" id="5FJX"/>
<dbReference type="SMR" id="P35197"/>
<dbReference type="BioGRID" id="31884">
    <property type="interactions" value="269"/>
</dbReference>
<dbReference type="DIP" id="DIP-809N"/>
<dbReference type="FunCoup" id="P35197">
    <property type="interactions" value="845"/>
</dbReference>
<dbReference type="IntAct" id="P35197">
    <property type="interactions" value="19"/>
</dbReference>
<dbReference type="MINT" id="P35197"/>
<dbReference type="STRING" id="4932.YDL226C"/>
<dbReference type="GlyGen" id="P35197">
    <property type="glycosylation" value="4 sites, 1 O-linked glycan (2 sites)"/>
</dbReference>
<dbReference type="iPTMnet" id="P35197"/>
<dbReference type="PaxDb" id="4932-YDL226C"/>
<dbReference type="PeptideAtlas" id="P35197"/>
<dbReference type="EnsemblFungi" id="YDL226C_mRNA">
    <property type="protein sequence ID" value="YDL226C"/>
    <property type="gene ID" value="YDL226C"/>
</dbReference>
<dbReference type="GeneID" id="851372"/>
<dbReference type="KEGG" id="sce:YDL226C"/>
<dbReference type="AGR" id="SGD:S000002385"/>
<dbReference type="SGD" id="S000002385">
    <property type="gene designation" value="GCS1"/>
</dbReference>
<dbReference type="VEuPathDB" id="FungiDB:YDL226C"/>
<dbReference type="eggNOG" id="KOG0704">
    <property type="taxonomic scope" value="Eukaryota"/>
</dbReference>
<dbReference type="HOGENOM" id="CLU_044516_2_0_1"/>
<dbReference type="InParanoid" id="P35197"/>
<dbReference type="OMA" id="MSKLWEV"/>
<dbReference type="OrthoDB" id="983479at2759"/>
<dbReference type="BioCyc" id="YEAST:G3O-29606-MONOMER"/>
<dbReference type="Reactome" id="R-SCE-6807878">
    <property type="pathway name" value="COPI-mediated anterograde transport"/>
</dbReference>
<dbReference type="Reactome" id="R-SCE-6811434">
    <property type="pathway name" value="COPI-dependent Golgi-to-ER retrograde traffic"/>
</dbReference>
<dbReference type="BioGRID-ORCS" id="851372">
    <property type="hits" value="4 hits in 10 CRISPR screens"/>
</dbReference>
<dbReference type="EvolutionaryTrace" id="P35197"/>
<dbReference type="PRO" id="PR:P35197"/>
<dbReference type="Proteomes" id="UP000002311">
    <property type="component" value="Chromosome IV"/>
</dbReference>
<dbReference type="RNAct" id="P35197">
    <property type="molecule type" value="protein"/>
</dbReference>
<dbReference type="GO" id="GO:0005856">
    <property type="term" value="C:cytoskeleton"/>
    <property type="evidence" value="ECO:0000315"/>
    <property type="project" value="SGD"/>
</dbReference>
<dbReference type="GO" id="GO:0005829">
    <property type="term" value="C:cytosol"/>
    <property type="evidence" value="ECO:0007005"/>
    <property type="project" value="SGD"/>
</dbReference>
<dbReference type="GO" id="GO:0005768">
    <property type="term" value="C:endosome"/>
    <property type="evidence" value="ECO:0000314"/>
    <property type="project" value="SGD"/>
</dbReference>
<dbReference type="GO" id="GO:0000139">
    <property type="term" value="C:Golgi membrane"/>
    <property type="evidence" value="ECO:0007669"/>
    <property type="project" value="GOC"/>
</dbReference>
<dbReference type="GO" id="GO:0005739">
    <property type="term" value="C:mitochondrion"/>
    <property type="evidence" value="ECO:0007669"/>
    <property type="project" value="UniProtKB-SubCell"/>
</dbReference>
<dbReference type="GO" id="GO:0048471">
    <property type="term" value="C:perinuclear region of cytoplasm"/>
    <property type="evidence" value="ECO:0007669"/>
    <property type="project" value="UniProtKB-SubCell"/>
</dbReference>
<dbReference type="GO" id="GO:0005802">
    <property type="term" value="C:trans-Golgi network"/>
    <property type="evidence" value="ECO:0000314"/>
    <property type="project" value="SGD"/>
</dbReference>
<dbReference type="GO" id="GO:0003779">
    <property type="term" value="F:actin binding"/>
    <property type="evidence" value="ECO:0000314"/>
    <property type="project" value="SGD"/>
</dbReference>
<dbReference type="GO" id="GO:0005096">
    <property type="term" value="F:GTPase activator activity"/>
    <property type="evidence" value="ECO:0000314"/>
    <property type="project" value="SGD"/>
</dbReference>
<dbReference type="GO" id="GO:0008270">
    <property type="term" value="F:zinc ion binding"/>
    <property type="evidence" value="ECO:0007669"/>
    <property type="project" value="UniProtKB-KW"/>
</dbReference>
<dbReference type="GO" id="GO:0007015">
    <property type="term" value="P:actin filament organization"/>
    <property type="evidence" value="ECO:0000315"/>
    <property type="project" value="SGD"/>
</dbReference>
<dbReference type="GO" id="GO:0048205">
    <property type="term" value="P:COPI coating of Golgi vesicle"/>
    <property type="evidence" value="ECO:0000318"/>
    <property type="project" value="GO_Central"/>
</dbReference>
<dbReference type="GO" id="GO:0006888">
    <property type="term" value="P:endoplasmic reticulum to Golgi vesicle-mediated transport"/>
    <property type="evidence" value="ECO:0000315"/>
    <property type="project" value="SGD"/>
</dbReference>
<dbReference type="GO" id="GO:0043001">
    <property type="term" value="P:Golgi to plasma membrane protein transport"/>
    <property type="evidence" value="ECO:0000315"/>
    <property type="project" value="SGD"/>
</dbReference>
<dbReference type="GO" id="GO:0000278">
    <property type="term" value="P:mitotic cell cycle"/>
    <property type="evidence" value="ECO:0000315"/>
    <property type="project" value="SGD"/>
</dbReference>
<dbReference type="GO" id="GO:0006890">
    <property type="term" value="P:retrograde vesicle-mediated transport, Golgi to endoplasmic reticulum"/>
    <property type="evidence" value="ECO:0000314"/>
    <property type="project" value="SGD"/>
</dbReference>
<dbReference type="CDD" id="cd08830">
    <property type="entry name" value="ArfGap_ArfGap1"/>
    <property type="match status" value="1"/>
</dbReference>
<dbReference type="FunFam" id="1.10.220.150:FF:000014">
    <property type="entry name" value="ADP-ribosylation factor GTPase-activating protein"/>
    <property type="match status" value="1"/>
</dbReference>
<dbReference type="Gene3D" id="1.10.220.150">
    <property type="entry name" value="Arf GTPase activating protein"/>
    <property type="match status" value="1"/>
</dbReference>
<dbReference type="InterPro" id="IPR037278">
    <property type="entry name" value="ARFGAP/RecO"/>
</dbReference>
<dbReference type="InterPro" id="IPR001164">
    <property type="entry name" value="ArfGAP_dom"/>
</dbReference>
<dbReference type="InterPro" id="IPR038508">
    <property type="entry name" value="ArfGAP_dom_sf"/>
</dbReference>
<dbReference type="PANTHER" id="PTHR46395">
    <property type="entry name" value="ADP-RIBOSYLATION FACTOR GTPASE-ACTIVATING PROTEIN 1"/>
    <property type="match status" value="1"/>
</dbReference>
<dbReference type="PANTHER" id="PTHR46395:SF1">
    <property type="entry name" value="ADP-RIBOSYLATION FACTOR GTPASE-ACTIVATING PROTEIN 1"/>
    <property type="match status" value="1"/>
</dbReference>
<dbReference type="Pfam" id="PF01412">
    <property type="entry name" value="ArfGap"/>
    <property type="match status" value="1"/>
</dbReference>
<dbReference type="PRINTS" id="PR00405">
    <property type="entry name" value="REVINTRACTNG"/>
</dbReference>
<dbReference type="SMART" id="SM00105">
    <property type="entry name" value="ArfGap"/>
    <property type="match status" value="1"/>
</dbReference>
<dbReference type="SUPFAM" id="SSF57863">
    <property type="entry name" value="ArfGap/RecO-like zinc finger"/>
    <property type="match status" value="1"/>
</dbReference>
<dbReference type="PROSITE" id="PS50115">
    <property type="entry name" value="ARFGAP"/>
    <property type="match status" value="1"/>
</dbReference>
<comment type="function">
    <text evidence="3 4 7">GTPase-activating protein (GAP) for ARF1 and ARF2. Involved in intracellular vesicular transport. Required for transport from the trans-Golgi network. Implicated in the regulation of retrograde transport from the Golgi to the ER and in actin cytoskeletal organization. May be involved in the maintenance of mitochondrial morphology, possibly through organizing the actin cytoskeleton in Saccharomyces.</text>
</comment>
<comment type="subcellular location">
    <subcellularLocation>
        <location evidence="4">Cytoplasm</location>
    </subcellularLocation>
    <subcellularLocation>
        <location evidence="4">Mitochondrion</location>
    </subcellularLocation>
    <subcellularLocation>
        <location evidence="4">Cytoplasm</location>
        <location evidence="4">Perinuclear region</location>
    </subcellularLocation>
    <subcellularLocation>
        <location evidence="8">Golgi apparatus</location>
    </subcellularLocation>
    <text>Found also in the mitochondria and in the perinuclear region.</text>
</comment>
<comment type="miscellaneous">
    <text evidence="5">Present with 9560 molecules/cell in log phase SD medium.</text>
</comment>
<keyword id="KW-0002">3D-structure</keyword>
<keyword id="KW-0963">Cytoplasm</keyword>
<keyword id="KW-0333">Golgi apparatus</keyword>
<keyword id="KW-0343">GTPase activation</keyword>
<keyword id="KW-0479">Metal-binding</keyword>
<keyword id="KW-0496">Mitochondrion</keyword>
<keyword id="KW-0597">Phosphoprotein</keyword>
<keyword id="KW-0653">Protein transport</keyword>
<keyword id="KW-1185">Reference proteome</keyword>
<keyword id="KW-0813">Transport</keyword>
<keyword id="KW-0862">Zinc</keyword>
<keyword id="KW-0863">Zinc-finger</keyword>
<accession>P35197</accession>
<accession>D6VRC9</accession>
<name>GCS1_YEAST</name>
<feature type="chain" id="PRO_0000074224" description="ADP-ribosylation factor GTPase-activating protein GCS1">
    <location>
        <begin position="1"/>
        <end position="352"/>
    </location>
</feature>
<feature type="domain" description="Arf-GAP" evidence="1">
    <location>
        <begin position="11"/>
        <end position="127"/>
    </location>
</feature>
<feature type="zinc finger region" description="C4-type" evidence="1">
    <location>
        <begin position="26"/>
        <end position="49"/>
    </location>
</feature>
<feature type="region of interest" description="Disordered" evidence="2">
    <location>
        <begin position="138"/>
        <end position="181"/>
    </location>
</feature>
<feature type="region of interest" description="Disordered" evidence="2">
    <location>
        <begin position="196"/>
        <end position="231"/>
    </location>
</feature>
<feature type="region of interest" description="Disordered" evidence="2">
    <location>
        <begin position="315"/>
        <end position="352"/>
    </location>
</feature>
<feature type="compositionally biased region" description="Low complexity" evidence="2">
    <location>
        <begin position="138"/>
        <end position="151"/>
    </location>
</feature>
<feature type="compositionally biased region" description="Polar residues" evidence="2">
    <location>
        <begin position="168"/>
        <end position="179"/>
    </location>
</feature>
<feature type="compositionally biased region" description="Polar residues" evidence="2">
    <location>
        <begin position="315"/>
        <end position="330"/>
    </location>
</feature>
<feature type="compositionally biased region" description="Basic and acidic residues" evidence="2">
    <location>
        <begin position="331"/>
        <end position="343"/>
    </location>
</feature>
<feature type="modified residue" description="Phosphothreonine" evidence="11">
    <location>
        <position position="151"/>
    </location>
</feature>
<feature type="modified residue" description="Phosphoserine" evidence="9 10 11">
    <location>
        <position position="157"/>
    </location>
</feature>
<feature type="modified residue" description="Phosphothreonine" evidence="9 11">
    <location>
        <position position="161"/>
    </location>
</feature>
<feature type="modified residue" description="Phosphoserine" evidence="11">
    <location>
        <position position="168"/>
    </location>
</feature>
<feature type="modified residue" description="Phosphothreonine" evidence="11">
    <location>
        <position position="170"/>
    </location>
</feature>
<feature type="modified residue" description="Phosphoserine" evidence="10">
    <location>
        <position position="260"/>
    </location>
</feature>
<feature type="sequence variant">
    <original>M</original>
    <variation>I</variation>
    <location>
        <position position="27"/>
    </location>
</feature>
<feature type="mutagenesis site" description="In GCS1-1; severely affect the function." evidence="6">
    <original>C</original>
    <variation>Y</variation>
    <location>
        <position position="29"/>
    </location>
</feature>
<organism>
    <name type="scientific">Saccharomyces cerevisiae (strain ATCC 204508 / S288c)</name>
    <name type="common">Baker's yeast</name>
    <dbReference type="NCBI Taxonomy" id="559292"/>
    <lineage>
        <taxon>Eukaryota</taxon>
        <taxon>Fungi</taxon>
        <taxon>Dikarya</taxon>
        <taxon>Ascomycota</taxon>
        <taxon>Saccharomycotina</taxon>
        <taxon>Saccharomycetes</taxon>
        <taxon>Saccharomycetales</taxon>
        <taxon>Saccharomycetaceae</taxon>
        <taxon>Saccharomyces</taxon>
    </lineage>
</organism>
<sequence length="352" mass="39296">MSDWKVDPDTRRRLLQLQKIGANKKCMDCGAPNPQWATPKFGAFICLECAGIHRGLGVHISFVRSITMDQFKPEELLRMEKGGNEPLTEWFKSHNIDLSLPQKVKYDNPVAEDYKEKLTCLCEDRVFEEREHLDFDASKLSATSQTAASATPGVAQSREGTPLENRRSATPANSSNGANFQKEKNEAYFAELGKKNQSRPDHLPPSQGGKYQGFGSTPAKPPQERSAGSSNTLSLENFQADPLGTLSRGWGLFSSAVTKSFEDVNETVIKPHVQQWQSGELSEETKRAAAQFGQKFQETSSYGFQAFSNFTKNFNGNAEDSSTAGNTTHTEYQKIDNNDKKNEQDEDKWDDF</sequence>
<gene>
    <name type="primary">GCS1</name>
    <name type="ordered locus">YDL226C</name>
</gene>
<reference key="1">
    <citation type="journal article" date="1994" name="EMBO J.">
        <title>A member of a novel family of yeast 'Zn-finger' proteins mediates the transition from stationary phase to cell proliferation.</title>
        <authorList>
            <person name="Ireland L.S."/>
            <person name="Johnston G.C."/>
            <person name="Drebot M.A."/>
            <person name="Dhillon N."/>
            <person name="Demaggio A.J."/>
            <person name="Hoekstra M.F."/>
            <person name="Singer R.A."/>
        </authorList>
    </citation>
    <scope>NUCLEOTIDE SEQUENCE [GENOMIC DNA]</scope>
    <scope>MUTAGENESIS OF CYS-29</scope>
</reference>
<reference key="2">
    <citation type="journal article" date="1997" name="Nature">
        <title>The nucleotide sequence of Saccharomyces cerevisiae chromosome IV.</title>
        <authorList>
            <person name="Jacq C."/>
            <person name="Alt-Moerbe J."/>
            <person name="Andre B."/>
            <person name="Arnold W."/>
            <person name="Bahr A."/>
            <person name="Ballesta J.P.G."/>
            <person name="Bargues M."/>
            <person name="Baron L."/>
            <person name="Becker A."/>
            <person name="Biteau N."/>
            <person name="Bloecker H."/>
            <person name="Blugeon C."/>
            <person name="Boskovic J."/>
            <person name="Brandt P."/>
            <person name="Brueckner M."/>
            <person name="Buitrago M.J."/>
            <person name="Coster F."/>
            <person name="Delaveau T."/>
            <person name="del Rey F."/>
            <person name="Dujon B."/>
            <person name="Eide L.G."/>
            <person name="Garcia-Cantalejo J.M."/>
            <person name="Goffeau A."/>
            <person name="Gomez-Peris A."/>
            <person name="Granotier C."/>
            <person name="Hanemann V."/>
            <person name="Hankeln T."/>
            <person name="Hoheisel J.D."/>
            <person name="Jaeger W."/>
            <person name="Jimenez A."/>
            <person name="Jonniaux J.-L."/>
            <person name="Kraemer C."/>
            <person name="Kuester H."/>
            <person name="Laamanen P."/>
            <person name="Legros Y."/>
            <person name="Louis E.J."/>
            <person name="Moeller-Rieker S."/>
            <person name="Monnet A."/>
            <person name="Moro M."/>
            <person name="Mueller-Auer S."/>
            <person name="Nussbaumer B."/>
            <person name="Paricio N."/>
            <person name="Paulin L."/>
            <person name="Perea J."/>
            <person name="Perez-Alonso M."/>
            <person name="Perez-Ortin J.E."/>
            <person name="Pohl T.M."/>
            <person name="Prydz H."/>
            <person name="Purnelle B."/>
            <person name="Rasmussen S.W."/>
            <person name="Remacha M.A."/>
            <person name="Revuelta J.L."/>
            <person name="Rieger M."/>
            <person name="Salom D."/>
            <person name="Saluz H.P."/>
            <person name="Saiz J.E."/>
            <person name="Saren A.-M."/>
            <person name="Schaefer M."/>
            <person name="Scharfe M."/>
            <person name="Schmidt E.R."/>
            <person name="Schneider C."/>
            <person name="Scholler P."/>
            <person name="Schwarz S."/>
            <person name="Soler-Mira A."/>
            <person name="Urrestarazu L.A."/>
            <person name="Verhasselt P."/>
            <person name="Vissers S."/>
            <person name="Voet M."/>
            <person name="Volckaert G."/>
            <person name="Wagner G."/>
            <person name="Wambutt R."/>
            <person name="Wedler E."/>
            <person name="Wedler H."/>
            <person name="Woelfl S."/>
            <person name="Harris D.E."/>
            <person name="Bowman S."/>
            <person name="Brown D."/>
            <person name="Churcher C.M."/>
            <person name="Connor R."/>
            <person name="Dedman K."/>
            <person name="Gentles S."/>
            <person name="Hamlin N."/>
            <person name="Hunt S."/>
            <person name="Jones L."/>
            <person name="McDonald S."/>
            <person name="Murphy L.D."/>
            <person name="Niblett D."/>
            <person name="Odell C."/>
            <person name="Oliver K."/>
            <person name="Rajandream M.A."/>
            <person name="Richards C."/>
            <person name="Shore L."/>
            <person name="Walsh S.V."/>
            <person name="Barrell B.G."/>
            <person name="Dietrich F.S."/>
            <person name="Mulligan J.T."/>
            <person name="Allen E."/>
            <person name="Araujo R."/>
            <person name="Aviles E."/>
            <person name="Berno A."/>
            <person name="Carpenter J."/>
            <person name="Chen E."/>
            <person name="Cherry J.M."/>
            <person name="Chung E."/>
            <person name="Duncan M."/>
            <person name="Hunicke-Smith S."/>
            <person name="Hyman R.W."/>
            <person name="Komp C."/>
            <person name="Lashkari D."/>
            <person name="Lew H."/>
            <person name="Lin D."/>
            <person name="Mosedale D."/>
            <person name="Nakahara K."/>
            <person name="Namath A."/>
            <person name="Oefner P."/>
            <person name="Oh C."/>
            <person name="Petel F.X."/>
            <person name="Roberts D."/>
            <person name="Schramm S."/>
            <person name="Schroeder M."/>
            <person name="Shogren T."/>
            <person name="Shroff N."/>
            <person name="Winant A."/>
            <person name="Yelton M.A."/>
            <person name="Botstein D."/>
            <person name="Davis R.W."/>
            <person name="Johnston M."/>
            <person name="Andrews S."/>
            <person name="Brinkman R."/>
            <person name="Cooper J."/>
            <person name="Ding H."/>
            <person name="Du Z."/>
            <person name="Favello A."/>
            <person name="Fulton L."/>
            <person name="Gattung S."/>
            <person name="Greco T."/>
            <person name="Hallsworth K."/>
            <person name="Hawkins J."/>
            <person name="Hillier L.W."/>
            <person name="Jier M."/>
            <person name="Johnson D."/>
            <person name="Johnston L."/>
            <person name="Kirsten J."/>
            <person name="Kucaba T."/>
            <person name="Langston Y."/>
            <person name="Latreille P."/>
            <person name="Le T."/>
            <person name="Mardis E."/>
            <person name="Menezes S."/>
            <person name="Miller N."/>
            <person name="Nhan M."/>
            <person name="Pauley A."/>
            <person name="Peluso D."/>
            <person name="Rifkin L."/>
            <person name="Riles L."/>
            <person name="Taich A."/>
            <person name="Trevaskis E."/>
            <person name="Vignati D."/>
            <person name="Wilcox L."/>
            <person name="Wohldman P."/>
            <person name="Vaudin M."/>
            <person name="Wilson R."/>
            <person name="Waterston R."/>
            <person name="Albermann K."/>
            <person name="Hani J."/>
            <person name="Heumann K."/>
            <person name="Kleine K."/>
            <person name="Mewes H.-W."/>
            <person name="Zollner A."/>
            <person name="Zaccaria P."/>
        </authorList>
    </citation>
    <scope>NUCLEOTIDE SEQUENCE [LARGE SCALE GENOMIC DNA]</scope>
    <source>
        <strain>ATCC 204508 / S288c</strain>
    </source>
</reference>
<reference key="3">
    <citation type="journal article" date="2014" name="G3 (Bethesda)">
        <title>The reference genome sequence of Saccharomyces cerevisiae: Then and now.</title>
        <authorList>
            <person name="Engel S.R."/>
            <person name="Dietrich F.S."/>
            <person name="Fisk D.G."/>
            <person name="Binkley G."/>
            <person name="Balakrishnan R."/>
            <person name="Costanzo M.C."/>
            <person name="Dwight S.S."/>
            <person name="Hitz B.C."/>
            <person name="Karra K."/>
            <person name="Nash R.S."/>
            <person name="Weng S."/>
            <person name="Wong E.D."/>
            <person name="Lloyd P."/>
            <person name="Skrzypek M.S."/>
            <person name="Miyasato S.R."/>
            <person name="Simison M."/>
            <person name="Cherry J.M."/>
        </authorList>
    </citation>
    <scope>GENOME REANNOTATION</scope>
    <source>
        <strain>ATCC 204508 / S288c</strain>
    </source>
</reference>
<reference key="4">
    <citation type="journal article" date="1999" name="EMBO J.">
        <title>Retrograde transport from the yeast Golgi is mediated by two ARF GAP proteins with overlapping function.</title>
        <authorList>
            <person name="Poon P.P."/>
            <person name="Cassel D."/>
            <person name="Spang A."/>
            <person name="Rotman M."/>
            <person name="Pick E."/>
            <person name="Singer R.A."/>
            <person name="Johnston G.C."/>
        </authorList>
    </citation>
    <scope>FUNCTION</scope>
</reference>
<reference key="5">
    <citation type="journal article" date="2001" name="J. Cell Biol.">
        <title>The Gcs1 and Age2 ArfGAP proteins provide overlapping essential function for transport from the yeast trans-Golgi network.</title>
        <authorList>
            <person name="Poon P.P."/>
            <person name="Nothwehr S.F."/>
            <person name="Singer R.A."/>
            <person name="Johnston G.C."/>
        </authorList>
    </citation>
    <scope>FUNCTION</scope>
</reference>
<reference key="6">
    <citation type="journal article" date="2002" name="J. Cell Sci.">
        <title>The yeast ADP-ribosylation factor GAP, Gcs1p, is involved in maintenance of mitochondrial morphology.</title>
        <authorList>
            <person name="Huang C.F."/>
            <person name="Chen C.C."/>
            <person name="Tung L."/>
            <person name="Buu L.M."/>
            <person name="Lee F.J.-S."/>
        </authorList>
    </citation>
    <scope>FUNCTION</scope>
    <scope>SUBCELLULAR LOCATION</scope>
</reference>
<reference key="7">
    <citation type="journal article" date="2003" name="Nature">
        <title>Global analysis of protein expression in yeast.</title>
        <authorList>
            <person name="Ghaemmaghami S."/>
            <person name="Huh W.-K."/>
            <person name="Bower K."/>
            <person name="Howson R.W."/>
            <person name="Belle A."/>
            <person name="Dephoure N."/>
            <person name="O'Shea E.K."/>
            <person name="Weissman J.S."/>
        </authorList>
    </citation>
    <scope>LEVEL OF PROTEIN EXPRESSION [LARGE SCALE ANALYSIS]</scope>
</reference>
<reference key="8">
    <citation type="journal article" date="2007" name="J. Proteome Res.">
        <title>Large-scale phosphorylation analysis of alpha-factor-arrested Saccharomyces cerevisiae.</title>
        <authorList>
            <person name="Li X."/>
            <person name="Gerber S.A."/>
            <person name="Rudner A.D."/>
            <person name="Beausoleil S.A."/>
            <person name="Haas W."/>
            <person name="Villen J."/>
            <person name="Elias J.E."/>
            <person name="Gygi S.P."/>
        </authorList>
    </citation>
    <scope>PHOSPHORYLATION [LARGE SCALE ANALYSIS] AT SER-157 AND THR-161</scope>
    <scope>IDENTIFICATION BY MASS SPECTROMETRY [LARGE SCALE ANALYSIS]</scope>
    <source>
        <strain>ADR376</strain>
    </source>
</reference>
<reference key="9">
    <citation type="journal article" date="2008" name="Mol. Cell. Proteomics">
        <title>A multidimensional chromatography technology for in-depth phosphoproteome analysis.</title>
        <authorList>
            <person name="Albuquerque C.P."/>
            <person name="Smolka M.B."/>
            <person name="Payne S.H."/>
            <person name="Bafna V."/>
            <person name="Eng J."/>
            <person name="Zhou H."/>
        </authorList>
    </citation>
    <scope>PHOSPHORYLATION [LARGE SCALE ANALYSIS] AT SER-157 AND SER-260</scope>
    <scope>IDENTIFICATION BY MASS SPECTROMETRY [LARGE SCALE ANALYSIS]</scope>
</reference>
<reference key="10">
    <citation type="journal article" date="2009" name="Science">
        <title>Global analysis of Cdk1 substrate phosphorylation sites provides insights into evolution.</title>
        <authorList>
            <person name="Holt L.J."/>
            <person name="Tuch B.B."/>
            <person name="Villen J."/>
            <person name="Johnson A.D."/>
            <person name="Gygi S.P."/>
            <person name="Morgan D.O."/>
        </authorList>
    </citation>
    <scope>PHOSPHORYLATION [LARGE SCALE ANALYSIS] AT THR-151; SER-157; THR-161; SER-168 AND THR-170</scope>
    <scope>IDENTIFICATION BY MASS SPECTROMETRY [LARGE SCALE ANALYSIS]</scope>
</reference>